<dbReference type="EMBL" id="X63741">
    <property type="protein sequence ID" value="CAA45275.1"/>
    <property type="molecule type" value="mRNA"/>
</dbReference>
<dbReference type="EMBL" id="S40832">
    <property type="protein sequence ID" value="AAB19317.1"/>
    <property type="molecule type" value="mRNA"/>
</dbReference>
<dbReference type="EMBL" id="AK292464">
    <property type="protein sequence ID" value="BAF85153.1"/>
    <property type="molecule type" value="mRNA"/>
</dbReference>
<dbReference type="EMBL" id="AK295134">
    <property type="protein sequence ID" value="BAG58157.1"/>
    <property type="molecule type" value="mRNA"/>
</dbReference>
<dbReference type="EMBL" id="AK313604">
    <property type="protein sequence ID" value="BAG36369.1"/>
    <property type="molecule type" value="mRNA"/>
</dbReference>
<dbReference type="EMBL" id="AC105046">
    <property type="status" value="NOT_ANNOTATED_CDS"/>
    <property type="molecule type" value="Genomic_DNA"/>
</dbReference>
<dbReference type="EMBL" id="BC104765">
    <property type="protein sequence ID" value="AAI04766.1"/>
    <property type="molecule type" value="mRNA"/>
</dbReference>
<dbReference type="EMBL" id="BC112279">
    <property type="protein sequence ID" value="AAI12280.1"/>
    <property type="molecule type" value="mRNA"/>
</dbReference>
<dbReference type="CCDS" id="CCDS56528.1">
    <molecule id="Q06889-2"/>
</dbReference>
<dbReference type="CCDS" id="CCDS6033.1">
    <molecule id="Q06889-1"/>
</dbReference>
<dbReference type="PIR" id="S60519">
    <property type="entry name" value="S19885"/>
</dbReference>
<dbReference type="RefSeq" id="NP_001186809.1">
    <molecule id="Q06889-2"/>
    <property type="nucleotide sequence ID" value="NM_001199880.2"/>
</dbReference>
<dbReference type="RefSeq" id="NP_001186810.1">
    <property type="nucleotide sequence ID" value="NM_001199881.1"/>
</dbReference>
<dbReference type="RefSeq" id="NP_004421.2">
    <molecule id="Q06889-1"/>
    <property type="nucleotide sequence ID" value="NM_004430.2"/>
</dbReference>
<dbReference type="RefSeq" id="XP_005273483.1">
    <property type="nucleotide sequence ID" value="XM_005273426.3"/>
</dbReference>
<dbReference type="RefSeq" id="XP_011542731.2">
    <molecule id="Q06889-2"/>
    <property type="nucleotide sequence ID" value="XM_011544429.3"/>
</dbReference>
<dbReference type="SMR" id="Q06889"/>
<dbReference type="BioGRID" id="108280">
    <property type="interactions" value="1"/>
</dbReference>
<dbReference type="FunCoup" id="Q06889">
    <property type="interactions" value="1327"/>
</dbReference>
<dbReference type="IntAct" id="Q06889">
    <property type="interactions" value="2"/>
</dbReference>
<dbReference type="STRING" id="9606.ENSP00000318057"/>
<dbReference type="GlyConnect" id="2036">
    <property type="glycosylation" value="1 N-Linked glycan (1 site)"/>
</dbReference>
<dbReference type="GlyCosmos" id="Q06889">
    <property type="glycosylation" value="1 site, 1 glycan"/>
</dbReference>
<dbReference type="GlyGen" id="Q06889">
    <property type="glycosylation" value="1 site, 1 N-linked glycan (1 site)"/>
</dbReference>
<dbReference type="iPTMnet" id="Q06889"/>
<dbReference type="PhosphoSitePlus" id="Q06889"/>
<dbReference type="BioMuta" id="EGR3"/>
<dbReference type="DMDM" id="730328"/>
<dbReference type="MassIVE" id="Q06889"/>
<dbReference type="PaxDb" id="9606-ENSP00000318057"/>
<dbReference type="PeptideAtlas" id="Q06889"/>
<dbReference type="ProteomicsDB" id="18765"/>
<dbReference type="ProteomicsDB" id="58487">
    <molecule id="Q06889-1"/>
</dbReference>
<dbReference type="TopDownProteomics" id="Q06889-1">
    <molecule id="Q06889-1"/>
</dbReference>
<dbReference type="Antibodypedia" id="22692">
    <property type="antibodies" value="229 antibodies from 28 providers"/>
</dbReference>
<dbReference type="DNASU" id="1960"/>
<dbReference type="Ensembl" id="ENST00000317216.3">
    <molecule id="Q06889-1"/>
    <property type="protein sequence ID" value="ENSP00000318057.2"/>
    <property type="gene ID" value="ENSG00000179388.9"/>
</dbReference>
<dbReference type="Ensembl" id="ENST00000522910.1">
    <molecule id="Q06889-2"/>
    <property type="protein sequence ID" value="ENSP00000430310.1"/>
    <property type="gene ID" value="ENSG00000179388.9"/>
</dbReference>
<dbReference type="GeneID" id="1960"/>
<dbReference type="KEGG" id="hsa:1960"/>
<dbReference type="MANE-Select" id="ENST00000317216.3">
    <property type="protein sequence ID" value="ENSP00000318057.2"/>
    <property type="RefSeq nucleotide sequence ID" value="NM_004430.3"/>
    <property type="RefSeq protein sequence ID" value="NP_004421.2"/>
</dbReference>
<dbReference type="UCSC" id="uc003xcm.2">
    <molecule id="Q06889-1"/>
    <property type="organism name" value="human"/>
</dbReference>
<dbReference type="AGR" id="HGNC:3240"/>
<dbReference type="CTD" id="1960"/>
<dbReference type="DisGeNET" id="1960"/>
<dbReference type="GeneCards" id="EGR3"/>
<dbReference type="HGNC" id="HGNC:3240">
    <property type="gene designation" value="EGR3"/>
</dbReference>
<dbReference type="HPA" id="ENSG00000179388">
    <property type="expression patterns" value="Tissue enhanced (skin)"/>
</dbReference>
<dbReference type="MIM" id="602419">
    <property type="type" value="gene"/>
</dbReference>
<dbReference type="neXtProt" id="NX_Q06889"/>
<dbReference type="OpenTargets" id="ENSG00000179388"/>
<dbReference type="PharmGKB" id="PA27675"/>
<dbReference type="VEuPathDB" id="HostDB:ENSG00000179388"/>
<dbReference type="eggNOG" id="KOG1721">
    <property type="taxonomic scope" value="Eukaryota"/>
</dbReference>
<dbReference type="GeneTree" id="ENSGT00940000160355"/>
<dbReference type="HOGENOM" id="CLU_043235_0_0_1"/>
<dbReference type="InParanoid" id="Q06889"/>
<dbReference type="OMA" id="GEVEPMY"/>
<dbReference type="OrthoDB" id="8197458at2759"/>
<dbReference type="PAN-GO" id="Q06889">
    <property type="GO annotations" value="3 GO annotations based on evolutionary models"/>
</dbReference>
<dbReference type="PhylomeDB" id="Q06889"/>
<dbReference type="TreeFam" id="TF318980"/>
<dbReference type="PathwayCommons" id="Q06889"/>
<dbReference type="Reactome" id="R-HSA-9031628">
    <property type="pathway name" value="NGF-stimulated transcription"/>
</dbReference>
<dbReference type="SignaLink" id="Q06889"/>
<dbReference type="SIGNOR" id="Q06889"/>
<dbReference type="BioGRID-ORCS" id="1960">
    <property type="hits" value="14 hits in 1173 CRISPR screens"/>
</dbReference>
<dbReference type="ChiTaRS" id="EGR3">
    <property type="organism name" value="human"/>
</dbReference>
<dbReference type="GeneWiki" id="EGR3"/>
<dbReference type="GenomeRNAi" id="1960"/>
<dbReference type="Pharos" id="Q06889">
    <property type="development level" value="Tbio"/>
</dbReference>
<dbReference type="PRO" id="PR:Q06889"/>
<dbReference type="Proteomes" id="UP000005640">
    <property type="component" value="Chromosome 8"/>
</dbReference>
<dbReference type="RNAct" id="Q06889">
    <property type="molecule type" value="protein"/>
</dbReference>
<dbReference type="Bgee" id="ENSG00000179388">
    <property type="expression patterns" value="Expressed in upper leg skin and 172 other cell types or tissues"/>
</dbReference>
<dbReference type="ExpressionAtlas" id="Q06889">
    <property type="expression patterns" value="baseline and differential"/>
</dbReference>
<dbReference type="GO" id="GO:0000785">
    <property type="term" value="C:chromatin"/>
    <property type="evidence" value="ECO:0000247"/>
    <property type="project" value="NTNU_SB"/>
</dbReference>
<dbReference type="GO" id="GO:0005654">
    <property type="term" value="C:nucleoplasm"/>
    <property type="evidence" value="ECO:0000304"/>
    <property type="project" value="Reactome"/>
</dbReference>
<dbReference type="GO" id="GO:0045202">
    <property type="term" value="C:synapse"/>
    <property type="evidence" value="ECO:0007669"/>
    <property type="project" value="GOC"/>
</dbReference>
<dbReference type="GO" id="GO:0001228">
    <property type="term" value="F:DNA-binding transcription activator activity, RNA polymerase II-specific"/>
    <property type="evidence" value="ECO:0007669"/>
    <property type="project" value="Ensembl"/>
</dbReference>
<dbReference type="GO" id="GO:0003700">
    <property type="term" value="F:DNA-binding transcription factor activity"/>
    <property type="evidence" value="ECO:0000304"/>
    <property type="project" value="ProtInc"/>
</dbReference>
<dbReference type="GO" id="GO:0000981">
    <property type="term" value="F:DNA-binding transcription factor activity, RNA polymerase II-specific"/>
    <property type="evidence" value="ECO:0000247"/>
    <property type="project" value="NTNU_SB"/>
</dbReference>
<dbReference type="GO" id="GO:0000978">
    <property type="term" value="F:RNA polymerase II cis-regulatory region sequence-specific DNA binding"/>
    <property type="evidence" value="ECO:0000318"/>
    <property type="project" value="GO_Central"/>
</dbReference>
<dbReference type="GO" id="GO:1990837">
    <property type="term" value="F:sequence-specific double-stranded DNA binding"/>
    <property type="evidence" value="ECO:0000314"/>
    <property type="project" value="ARUK-UCL"/>
</dbReference>
<dbReference type="GO" id="GO:0008270">
    <property type="term" value="F:zinc ion binding"/>
    <property type="evidence" value="ECO:0007669"/>
    <property type="project" value="UniProtKB-KW"/>
</dbReference>
<dbReference type="GO" id="GO:0002042">
    <property type="term" value="P:cell migration involved in sprouting angiogenesis"/>
    <property type="evidence" value="ECO:0000314"/>
    <property type="project" value="BHF-UCL"/>
</dbReference>
<dbReference type="GO" id="GO:0044344">
    <property type="term" value="P:cellular response to fibroblast growth factor stimulus"/>
    <property type="evidence" value="ECO:0000315"/>
    <property type="project" value="BHF-UCL"/>
</dbReference>
<dbReference type="GO" id="GO:0035924">
    <property type="term" value="P:cellular response to vascular endothelial growth factor stimulus"/>
    <property type="evidence" value="ECO:0000315"/>
    <property type="project" value="BHF-UCL"/>
</dbReference>
<dbReference type="GO" id="GO:0007623">
    <property type="term" value="P:circadian rhythm"/>
    <property type="evidence" value="ECO:0000304"/>
    <property type="project" value="ProtInc"/>
</dbReference>
<dbReference type="GO" id="GO:0035767">
    <property type="term" value="P:endothelial cell chemotaxis"/>
    <property type="evidence" value="ECO:0000315"/>
    <property type="project" value="BHF-UCL"/>
</dbReference>
<dbReference type="GO" id="GO:0007517">
    <property type="term" value="P:muscle organ development"/>
    <property type="evidence" value="ECO:0000304"/>
    <property type="project" value="ProtInc"/>
</dbReference>
<dbReference type="GO" id="GO:0043066">
    <property type="term" value="P:negative regulation of apoptotic process"/>
    <property type="evidence" value="ECO:0000315"/>
    <property type="project" value="BHF-UCL"/>
</dbReference>
<dbReference type="GO" id="GO:0007274">
    <property type="term" value="P:neuromuscular synaptic transmission"/>
    <property type="evidence" value="ECO:0007669"/>
    <property type="project" value="Ensembl"/>
</dbReference>
<dbReference type="GO" id="GO:0007422">
    <property type="term" value="P:peripheral nervous system development"/>
    <property type="evidence" value="ECO:0007669"/>
    <property type="project" value="Ensembl"/>
</dbReference>
<dbReference type="GO" id="GO:0001938">
    <property type="term" value="P:positive regulation of endothelial cell proliferation"/>
    <property type="evidence" value="ECO:0000315"/>
    <property type="project" value="BHF-UCL"/>
</dbReference>
<dbReference type="GO" id="GO:0033089">
    <property type="term" value="P:positive regulation of T cell differentiation in thymus"/>
    <property type="evidence" value="ECO:0007669"/>
    <property type="project" value="Ensembl"/>
</dbReference>
<dbReference type="GO" id="GO:0045586">
    <property type="term" value="P:regulation of gamma-delta T cell differentiation"/>
    <property type="evidence" value="ECO:0007669"/>
    <property type="project" value="Ensembl"/>
</dbReference>
<dbReference type="GO" id="GO:0006357">
    <property type="term" value="P:regulation of transcription by RNA polymerase II"/>
    <property type="evidence" value="ECO:0000318"/>
    <property type="project" value="GO_Central"/>
</dbReference>
<dbReference type="FunFam" id="3.30.160.60:FF:000392">
    <property type="entry name" value="early growth response protein 3"/>
    <property type="match status" value="1"/>
</dbReference>
<dbReference type="FunFam" id="3.30.160.60:FF:000324">
    <property type="entry name" value="Early growth response protein 4"/>
    <property type="match status" value="1"/>
</dbReference>
<dbReference type="FunFam" id="3.30.160.60:FF:000419">
    <property type="entry name" value="Early growth response protein 4"/>
    <property type="match status" value="1"/>
</dbReference>
<dbReference type="Gene3D" id="3.30.160.60">
    <property type="entry name" value="Classic Zinc Finger"/>
    <property type="match status" value="3"/>
</dbReference>
<dbReference type="InterPro" id="IPR021849">
    <property type="entry name" value="EGR_N"/>
</dbReference>
<dbReference type="InterPro" id="IPR036236">
    <property type="entry name" value="Znf_C2H2_sf"/>
</dbReference>
<dbReference type="InterPro" id="IPR013087">
    <property type="entry name" value="Znf_C2H2_type"/>
</dbReference>
<dbReference type="PANTHER" id="PTHR23235:SF78">
    <property type="entry name" value="EARLY GROWTH RESPONSE PROTEIN 3"/>
    <property type="match status" value="1"/>
</dbReference>
<dbReference type="PANTHER" id="PTHR23235">
    <property type="entry name" value="KRUEPPEL-LIKE TRANSCRIPTION FACTOR"/>
    <property type="match status" value="1"/>
</dbReference>
<dbReference type="Pfam" id="PF11928">
    <property type="entry name" value="DUF3446"/>
    <property type="match status" value="1"/>
</dbReference>
<dbReference type="Pfam" id="PF00096">
    <property type="entry name" value="zf-C2H2"/>
    <property type="match status" value="3"/>
</dbReference>
<dbReference type="SMART" id="SM00355">
    <property type="entry name" value="ZnF_C2H2"/>
    <property type="match status" value="3"/>
</dbReference>
<dbReference type="SUPFAM" id="SSF57667">
    <property type="entry name" value="beta-beta-alpha zinc fingers"/>
    <property type="match status" value="2"/>
</dbReference>
<dbReference type="PROSITE" id="PS00028">
    <property type="entry name" value="ZINC_FINGER_C2H2_1"/>
    <property type="match status" value="3"/>
</dbReference>
<dbReference type="PROSITE" id="PS50157">
    <property type="entry name" value="ZINC_FINGER_C2H2_2"/>
    <property type="match status" value="3"/>
</dbReference>
<feature type="chain" id="PRO_0000047125" description="Early growth response protein 3">
    <location>
        <begin position="1"/>
        <end position="387"/>
    </location>
</feature>
<feature type="zinc finger region" description="C2H2-type 1" evidence="1">
    <location>
        <begin position="275"/>
        <end position="299"/>
    </location>
</feature>
<feature type="zinc finger region" description="C2H2-type 2" evidence="1">
    <location>
        <begin position="305"/>
        <end position="327"/>
    </location>
</feature>
<feature type="zinc finger region" description="C2H2-type 3" evidence="1">
    <location>
        <begin position="333"/>
        <end position="355"/>
    </location>
</feature>
<feature type="region of interest" description="Disordered" evidence="2">
    <location>
        <begin position="241"/>
        <end position="283"/>
    </location>
</feature>
<feature type="region of interest" description="Disordered" evidence="2">
    <location>
        <begin position="348"/>
        <end position="387"/>
    </location>
</feature>
<feature type="compositionally biased region" description="Basic and acidic residues" evidence="2">
    <location>
        <begin position="269"/>
        <end position="283"/>
    </location>
</feature>
<feature type="compositionally biased region" description="Basic residues" evidence="2">
    <location>
        <begin position="350"/>
        <end position="360"/>
    </location>
</feature>
<feature type="compositionally biased region" description="Low complexity" evidence="2">
    <location>
        <begin position="368"/>
        <end position="387"/>
    </location>
</feature>
<feature type="splice variant" id="VSP_045954" description="In isoform 2." evidence="3">
    <original>MTGKLAEKLPVTMSSLLNQLPDNLYPEEIPSALNLFSGSSDSVVHYNQMAT</original>
    <variation>MEPCAAWSPRGGR</variation>
    <location>
        <begin position="1"/>
        <end position="51"/>
    </location>
</feature>
<feature type="sequence conflict" description="In Ref. 3; BAG58157." evidence="4" ref="3">
    <original>I</original>
    <variation>T</variation>
    <location>
        <position position="102"/>
    </location>
</feature>
<feature type="sequence conflict" description="In Ref. 2; AAB19317." evidence="4" ref="2">
    <original>I</original>
    <variation>T</variation>
    <location>
        <position position="225"/>
    </location>
</feature>
<reference key="1">
    <citation type="journal article" date="1993" name="Int. Immunol.">
        <title>Expression of PILOT, a putative transcription factor, requires two signals and is cyclosporin A sensitive in T cells.</title>
        <authorList>
            <person name="Mages H.W."/>
            <person name="Stamminger T."/>
            <person name="Rilke O."/>
            <person name="Bravo R."/>
            <person name="Kroczek R.A."/>
        </authorList>
    </citation>
    <scope>NUCLEOTIDE SEQUENCE [MRNA] (ISOFORM 1)</scope>
    <source>
        <tissue>Peripheral blood T-cell</tissue>
    </source>
</reference>
<reference key="2">
    <citation type="journal article" date="1991" name="Oncogene">
        <title>EGR3, a novel member of the Egr family of genes encoding immediate-early transcription factors.</title>
        <authorList>
            <person name="Patwardhan S."/>
            <person name="Gashler A."/>
            <person name="Siegel M.G."/>
            <person name="Chang L.C."/>
            <person name="Joseph L.J."/>
            <person name="Shows T.B."/>
            <person name="le Beau M.M."/>
            <person name="Sukhatme V.P."/>
        </authorList>
    </citation>
    <scope>NUCLEOTIDE SEQUENCE [MRNA] (ISOFORM 1)</scope>
</reference>
<reference key="3">
    <citation type="journal article" date="2004" name="Nat. Genet.">
        <title>Complete sequencing and characterization of 21,243 full-length human cDNAs.</title>
        <authorList>
            <person name="Ota T."/>
            <person name="Suzuki Y."/>
            <person name="Nishikawa T."/>
            <person name="Otsuki T."/>
            <person name="Sugiyama T."/>
            <person name="Irie R."/>
            <person name="Wakamatsu A."/>
            <person name="Hayashi K."/>
            <person name="Sato H."/>
            <person name="Nagai K."/>
            <person name="Kimura K."/>
            <person name="Makita H."/>
            <person name="Sekine M."/>
            <person name="Obayashi M."/>
            <person name="Nishi T."/>
            <person name="Shibahara T."/>
            <person name="Tanaka T."/>
            <person name="Ishii S."/>
            <person name="Yamamoto J."/>
            <person name="Saito K."/>
            <person name="Kawai Y."/>
            <person name="Isono Y."/>
            <person name="Nakamura Y."/>
            <person name="Nagahari K."/>
            <person name="Murakami K."/>
            <person name="Yasuda T."/>
            <person name="Iwayanagi T."/>
            <person name="Wagatsuma M."/>
            <person name="Shiratori A."/>
            <person name="Sudo H."/>
            <person name="Hosoiri T."/>
            <person name="Kaku Y."/>
            <person name="Kodaira H."/>
            <person name="Kondo H."/>
            <person name="Sugawara M."/>
            <person name="Takahashi M."/>
            <person name="Kanda K."/>
            <person name="Yokoi T."/>
            <person name="Furuya T."/>
            <person name="Kikkawa E."/>
            <person name="Omura Y."/>
            <person name="Abe K."/>
            <person name="Kamihara K."/>
            <person name="Katsuta N."/>
            <person name="Sato K."/>
            <person name="Tanikawa M."/>
            <person name="Yamazaki M."/>
            <person name="Ninomiya K."/>
            <person name="Ishibashi T."/>
            <person name="Yamashita H."/>
            <person name="Murakawa K."/>
            <person name="Fujimori K."/>
            <person name="Tanai H."/>
            <person name="Kimata M."/>
            <person name="Watanabe M."/>
            <person name="Hiraoka S."/>
            <person name="Chiba Y."/>
            <person name="Ishida S."/>
            <person name="Ono Y."/>
            <person name="Takiguchi S."/>
            <person name="Watanabe S."/>
            <person name="Yosida M."/>
            <person name="Hotuta T."/>
            <person name="Kusano J."/>
            <person name="Kanehori K."/>
            <person name="Takahashi-Fujii A."/>
            <person name="Hara H."/>
            <person name="Tanase T.-O."/>
            <person name="Nomura Y."/>
            <person name="Togiya S."/>
            <person name="Komai F."/>
            <person name="Hara R."/>
            <person name="Takeuchi K."/>
            <person name="Arita M."/>
            <person name="Imose N."/>
            <person name="Musashino K."/>
            <person name="Yuuki H."/>
            <person name="Oshima A."/>
            <person name="Sasaki N."/>
            <person name="Aotsuka S."/>
            <person name="Yoshikawa Y."/>
            <person name="Matsunawa H."/>
            <person name="Ichihara T."/>
            <person name="Shiohata N."/>
            <person name="Sano S."/>
            <person name="Moriya S."/>
            <person name="Momiyama H."/>
            <person name="Satoh N."/>
            <person name="Takami S."/>
            <person name="Terashima Y."/>
            <person name="Suzuki O."/>
            <person name="Nakagawa S."/>
            <person name="Senoh A."/>
            <person name="Mizoguchi H."/>
            <person name="Goto Y."/>
            <person name="Shimizu F."/>
            <person name="Wakebe H."/>
            <person name="Hishigaki H."/>
            <person name="Watanabe T."/>
            <person name="Sugiyama A."/>
            <person name="Takemoto M."/>
            <person name="Kawakami B."/>
            <person name="Yamazaki M."/>
            <person name="Watanabe K."/>
            <person name="Kumagai A."/>
            <person name="Itakura S."/>
            <person name="Fukuzumi Y."/>
            <person name="Fujimori Y."/>
            <person name="Komiyama M."/>
            <person name="Tashiro H."/>
            <person name="Tanigami A."/>
            <person name="Fujiwara T."/>
            <person name="Ono T."/>
            <person name="Yamada K."/>
            <person name="Fujii Y."/>
            <person name="Ozaki K."/>
            <person name="Hirao M."/>
            <person name="Ohmori Y."/>
            <person name="Kawabata A."/>
            <person name="Hikiji T."/>
            <person name="Kobatake N."/>
            <person name="Inagaki H."/>
            <person name="Ikema Y."/>
            <person name="Okamoto S."/>
            <person name="Okitani R."/>
            <person name="Kawakami T."/>
            <person name="Noguchi S."/>
            <person name="Itoh T."/>
            <person name="Shigeta K."/>
            <person name="Senba T."/>
            <person name="Matsumura K."/>
            <person name="Nakajima Y."/>
            <person name="Mizuno T."/>
            <person name="Morinaga M."/>
            <person name="Sasaki M."/>
            <person name="Togashi T."/>
            <person name="Oyama M."/>
            <person name="Hata H."/>
            <person name="Watanabe M."/>
            <person name="Komatsu T."/>
            <person name="Mizushima-Sugano J."/>
            <person name="Satoh T."/>
            <person name="Shirai Y."/>
            <person name="Takahashi Y."/>
            <person name="Nakagawa K."/>
            <person name="Okumura K."/>
            <person name="Nagase T."/>
            <person name="Nomura N."/>
            <person name="Kikuchi H."/>
            <person name="Masuho Y."/>
            <person name="Yamashita R."/>
            <person name="Nakai K."/>
            <person name="Yada T."/>
            <person name="Nakamura Y."/>
            <person name="Ohara O."/>
            <person name="Isogai T."/>
            <person name="Sugano S."/>
        </authorList>
    </citation>
    <scope>NUCLEOTIDE SEQUENCE [LARGE SCALE MRNA] (ISOFORMS 1 AND 2)</scope>
    <source>
        <tissue>Brain</tissue>
        <tissue>Testis</tissue>
    </source>
</reference>
<reference key="4">
    <citation type="journal article" date="2006" name="Nature">
        <title>DNA sequence and analysis of human chromosome 8.</title>
        <authorList>
            <person name="Nusbaum C."/>
            <person name="Mikkelsen T.S."/>
            <person name="Zody M.C."/>
            <person name="Asakawa S."/>
            <person name="Taudien S."/>
            <person name="Garber M."/>
            <person name="Kodira C.D."/>
            <person name="Schueler M.G."/>
            <person name="Shimizu A."/>
            <person name="Whittaker C.A."/>
            <person name="Chang J.L."/>
            <person name="Cuomo C.A."/>
            <person name="Dewar K."/>
            <person name="FitzGerald M.G."/>
            <person name="Yang X."/>
            <person name="Allen N.R."/>
            <person name="Anderson S."/>
            <person name="Asakawa T."/>
            <person name="Blechschmidt K."/>
            <person name="Bloom T."/>
            <person name="Borowsky M.L."/>
            <person name="Butler J."/>
            <person name="Cook A."/>
            <person name="Corum B."/>
            <person name="DeArellano K."/>
            <person name="DeCaprio D."/>
            <person name="Dooley K.T."/>
            <person name="Dorris L. III"/>
            <person name="Engels R."/>
            <person name="Gloeckner G."/>
            <person name="Hafez N."/>
            <person name="Hagopian D.S."/>
            <person name="Hall J.L."/>
            <person name="Ishikawa S.K."/>
            <person name="Jaffe D.B."/>
            <person name="Kamat A."/>
            <person name="Kudoh J."/>
            <person name="Lehmann R."/>
            <person name="Lokitsang T."/>
            <person name="Macdonald P."/>
            <person name="Major J.E."/>
            <person name="Matthews C.D."/>
            <person name="Mauceli E."/>
            <person name="Menzel U."/>
            <person name="Mihalev A.H."/>
            <person name="Minoshima S."/>
            <person name="Murayama Y."/>
            <person name="Naylor J.W."/>
            <person name="Nicol R."/>
            <person name="Nguyen C."/>
            <person name="O'Leary S.B."/>
            <person name="O'Neill K."/>
            <person name="Parker S.C.J."/>
            <person name="Polley A."/>
            <person name="Raymond C.K."/>
            <person name="Reichwald K."/>
            <person name="Rodriguez J."/>
            <person name="Sasaki T."/>
            <person name="Schilhabel M."/>
            <person name="Siddiqui R."/>
            <person name="Smith C.L."/>
            <person name="Sneddon T.P."/>
            <person name="Talamas J.A."/>
            <person name="Tenzin P."/>
            <person name="Topham K."/>
            <person name="Venkataraman V."/>
            <person name="Wen G."/>
            <person name="Yamazaki S."/>
            <person name="Young S.K."/>
            <person name="Zeng Q."/>
            <person name="Zimmer A.R."/>
            <person name="Rosenthal A."/>
            <person name="Birren B.W."/>
            <person name="Platzer M."/>
            <person name="Shimizu N."/>
            <person name="Lander E.S."/>
        </authorList>
    </citation>
    <scope>NUCLEOTIDE SEQUENCE [LARGE SCALE GENOMIC DNA]</scope>
</reference>
<reference key="5">
    <citation type="journal article" date="2004" name="Genome Res.">
        <title>The status, quality, and expansion of the NIH full-length cDNA project: the Mammalian Gene Collection (MGC).</title>
        <authorList>
            <consortium name="The MGC Project Team"/>
        </authorList>
    </citation>
    <scope>NUCLEOTIDE SEQUENCE [LARGE SCALE MRNA] (ISOFORM 1)</scope>
    <source>
        <tissue>Brain</tissue>
    </source>
</reference>
<comment type="function">
    <text>Probable transcription factor involved in muscle spindle development.</text>
</comment>
<comment type="subcellular location">
    <subcellularLocation>
        <location evidence="4">Nucleus</location>
    </subcellularLocation>
</comment>
<comment type="alternative products">
    <event type="alternative splicing"/>
    <isoform>
        <id>Q06889-1</id>
        <name>1</name>
        <sequence type="displayed"/>
    </isoform>
    <isoform>
        <id>Q06889-2</id>
        <name>2</name>
        <sequence type="described" ref="VSP_045954"/>
    </isoform>
</comment>
<comment type="developmental stage">
    <text>In T-cells, expressed 20 minutes following activation.</text>
</comment>
<comment type="similarity">
    <text evidence="4">Belongs to the EGR C2H2-type zinc-finger protein family.</text>
</comment>
<organism>
    <name type="scientific">Homo sapiens</name>
    <name type="common">Human</name>
    <dbReference type="NCBI Taxonomy" id="9606"/>
    <lineage>
        <taxon>Eukaryota</taxon>
        <taxon>Metazoa</taxon>
        <taxon>Chordata</taxon>
        <taxon>Craniata</taxon>
        <taxon>Vertebrata</taxon>
        <taxon>Euteleostomi</taxon>
        <taxon>Mammalia</taxon>
        <taxon>Eutheria</taxon>
        <taxon>Euarchontoglires</taxon>
        <taxon>Primates</taxon>
        <taxon>Haplorrhini</taxon>
        <taxon>Catarrhini</taxon>
        <taxon>Hominidae</taxon>
        <taxon>Homo</taxon>
    </lineage>
</organism>
<keyword id="KW-0025">Alternative splicing</keyword>
<keyword id="KW-0238">DNA-binding</keyword>
<keyword id="KW-0479">Metal-binding</keyword>
<keyword id="KW-0539">Nucleus</keyword>
<keyword id="KW-1267">Proteomics identification</keyword>
<keyword id="KW-1185">Reference proteome</keyword>
<keyword id="KW-0677">Repeat</keyword>
<keyword id="KW-0804">Transcription</keyword>
<keyword id="KW-0805">Transcription regulation</keyword>
<keyword id="KW-0862">Zinc</keyword>
<keyword id="KW-0863">Zinc-finger</keyword>
<protein>
    <recommendedName>
        <fullName>Early growth response protein 3</fullName>
        <shortName>EGR-3</shortName>
    </recommendedName>
    <alternativeName>
        <fullName>Zinc finger protein pilot</fullName>
    </alternativeName>
</protein>
<proteinExistence type="evidence at protein level"/>
<sequence length="387" mass="42613">MTGKLAEKLPVTMSSLLNQLPDNLYPEEIPSALNLFSGSSDSVVHYNQMATENVMDIGLTNEKPNPELSYSGSFQPAPGNKTVTYLGKFAFDSPSNWCQDNIISLMSAGILGVPPASGALSTQTSTASMVQPPQGDVEAMYPALPPYSNCGDLYSEPVSFHDPQGNPGLAYSPQDYQSAKPALDSNLFPMIPDYNLYHHPNDMGSIPEHKPFQGMDPIRVNPPPITPLETIKAFKDKQIHPGFGSLPQPPLTLKPIRPRKYPNRPSKTPLHERPHACPAEGCDRRFSRSDELTRHLRIHTGHKPFQCRICMRSFSRSDHLTTHIRTHTGEKPFACEFCGRKFARSDERKRHAKIHLKQKEKKAEKGGAPSASSAPPVSLAPVVTTCA</sequence>
<evidence type="ECO:0000255" key="1">
    <source>
        <dbReference type="PROSITE-ProRule" id="PRU00042"/>
    </source>
</evidence>
<evidence type="ECO:0000256" key="2">
    <source>
        <dbReference type="SAM" id="MobiDB-lite"/>
    </source>
</evidence>
<evidence type="ECO:0000303" key="3">
    <source>
    </source>
</evidence>
<evidence type="ECO:0000305" key="4"/>
<accession>Q06889</accession>
<accession>A8K8U9</accession>
<accession>B4DHJ5</accession>
<accession>E7EW38</accession>
<accession>Q2M3W2</accession>
<gene>
    <name type="primary">EGR3</name>
    <name type="synonym">PILOT</name>
</gene>
<name>EGR3_HUMAN</name>